<reference key="1">
    <citation type="journal article" date="2008" name="J. Bacteriol.">
        <title>Insights into the environmental resistance gene pool from the genome sequence of the multidrug-resistant environmental isolate Escherichia coli SMS-3-5.</title>
        <authorList>
            <person name="Fricke W.F."/>
            <person name="Wright M.S."/>
            <person name="Lindell A.H."/>
            <person name="Harkins D.M."/>
            <person name="Baker-Austin C."/>
            <person name="Ravel J."/>
            <person name="Stepanauskas R."/>
        </authorList>
    </citation>
    <scope>NUCLEOTIDE SEQUENCE [LARGE SCALE GENOMIC DNA]</scope>
    <source>
        <strain>SMS-3-5 / SECEC</strain>
    </source>
</reference>
<accession>B1LPH0</accession>
<gene>
    <name evidence="1" type="primary">metAS</name>
    <name type="ordered locus">EcSMS35_4467</name>
</gene>
<protein>
    <recommendedName>
        <fullName evidence="1">Homoserine O-succinyltransferase</fullName>
        <shortName evidence="1">HST</shortName>
        <ecNumber evidence="1">2.3.1.46</ecNumber>
    </recommendedName>
    <alternativeName>
        <fullName evidence="1">Homoserine transsuccinylase</fullName>
        <shortName evidence="1">HTS</shortName>
    </alternativeName>
</protein>
<sequence length="309" mass="35784">MPIRVPDELPAVNFLREENVFVMTTSRASGQEIRPLKVLILNLMPKKIETENQFLRLLSNSPLQVDIQLLRIDSRESRNTPAEHLNNFYCNFEDIQEQNFDGLIVTGAPLGLVEFNDVAYWPQIKQVLEWSKDHVTSTLFVCWAVQAALNILYGIPKQTRTDKLSGVYEHHILHPHALLTRGFDDSFLAPHSRYADFPAALIRDYTDLEILAETEEGDAYLFASKDKRIAFVTGHPEYDAQTLAQEYFRDVEAGLDPEVPYNYFPHNDPQNKPRASWRSHGNLLFTNWLNYYVYQITPYDLRHMNPTLD</sequence>
<feature type="chain" id="PRO_1000119452" description="Homoserine O-succinyltransferase">
    <location>
        <begin position="1"/>
        <end position="309"/>
    </location>
</feature>
<feature type="active site" description="Acyl-thioester intermediate" evidence="1">
    <location>
        <position position="142"/>
    </location>
</feature>
<feature type="active site" description="Proton acceptor" evidence="1">
    <location>
        <position position="235"/>
    </location>
</feature>
<feature type="active site" evidence="1">
    <location>
        <position position="237"/>
    </location>
</feature>
<feature type="binding site" evidence="1">
    <location>
        <position position="163"/>
    </location>
    <ligand>
        <name>substrate</name>
    </ligand>
</feature>
<feature type="binding site" evidence="1">
    <location>
        <position position="192"/>
    </location>
    <ligand>
        <name>substrate</name>
    </ligand>
</feature>
<feature type="binding site" evidence="1">
    <location>
        <position position="249"/>
    </location>
    <ligand>
        <name>substrate</name>
    </ligand>
</feature>
<feature type="site" description="Important for acyl-CoA specificity" evidence="1">
    <location>
        <position position="111"/>
    </location>
</feature>
<feature type="site" description="Important for substrate specificity" evidence="1">
    <location>
        <position position="192"/>
    </location>
</feature>
<comment type="function">
    <text evidence="1">Transfers a succinyl group from succinyl-CoA to L-homoserine, forming succinyl-L-homoserine.</text>
</comment>
<comment type="catalytic activity">
    <reaction evidence="1">
        <text>L-homoserine + succinyl-CoA = O-succinyl-L-homoserine + CoA</text>
        <dbReference type="Rhea" id="RHEA:22008"/>
        <dbReference type="ChEBI" id="CHEBI:57287"/>
        <dbReference type="ChEBI" id="CHEBI:57292"/>
        <dbReference type="ChEBI" id="CHEBI:57476"/>
        <dbReference type="ChEBI" id="CHEBI:57661"/>
        <dbReference type="EC" id="2.3.1.46"/>
    </reaction>
</comment>
<comment type="pathway">
    <text evidence="1">Amino-acid biosynthesis; L-methionine biosynthesis via de novo pathway; O-succinyl-L-homoserine from L-homoserine: step 1/1.</text>
</comment>
<comment type="subunit">
    <text evidence="1">Homodimer.</text>
</comment>
<comment type="subcellular location">
    <subcellularLocation>
        <location evidence="1">Cytoplasm</location>
    </subcellularLocation>
</comment>
<comment type="similarity">
    <text evidence="1">Belongs to the MetA family.</text>
</comment>
<organism>
    <name type="scientific">Escherichia coli (strain SMS-3-5 / SECEC)</name>
    <dbReference type="NCBI Taxonomy" id="439855"/>
    <lineage>
        <taxon>Bacteria</taxon>
        <taxon>Pseudomonadati</taxon>
        <taxon>Pseudomonadota</taxon>
        <taxon>Gammaproteobacteria</taxon>
        <taxon>Enterobacterales</taxon>
        <taxon>Enterobacteriaceae</taxon>
        <taxon>Escherichia</taxon>
    </lineage>
</organism>
<proteinExistence type="inferred from homology"/>
<keyword id="KW-0012">Acyltransferase</keyword>
<keyword id="KW-0028">Amino-acid biosynthesis</keyword>
<keyword id="KW-0963">Cytoplasm</keyword>
<keyword id="KW-0486">Methionine biosynthesis</keyword>
<keyword id="KW-0808">Transferase</keyword>
<name>METAS_ECOSM</name>
<dbReference type="EC" id="2.3.1.46" evidence="1"/>
<dbReference type="EMBL" id="CP000970">
    <property type="protein sequence ID" value="ACB17628.1"/>
    <property type="molecule type" value="Genomic_DNA"/>
</dbReference>
<dbReference type="SMR" id="B1LPH0"/>
<dbReference type="KEGG" id="ecm:EcSMS35_4467"/>
<dbReference type="HOGENOM" id="CLU_057851_0_1_6"/>
<dbReference type="UniPathway" id="UPA00051">
    <property type="reaction ID" value="UER00075"/>
</dbReference>
<dbReference type="Proteomes" id="UP000007011">
    <property type="component" value="Chromosome"/>
</dbReference>
<dbReference type="GO" id="GO:0005737">
    <property type="term" value="C:cytoplasm"/>
    <property type="evidence" value="ECO:0007669"/>
    <property type="project" value="UniProtKB-SubCell"/>
</dbReference>
<dbReference type="GO" id="GO:0004414">
    <property type="term" value="F:homoserine O-acetyltransferase activity"/>
    <property type="evidence" value="ECO:0007669"/>
    <property type="project" value="UniProtKB-UniRule"/>
</dbReference>
<dbReference type="GO" id="GO:0008899">
    <property type="term" value="F:homoserine O-succinyltransferase activity"/>
    <property type="evidence" value="ECO:0007669"/>
    <property type="project" value="UniProtKB-EC"/>
</dbReference>
<dbReference type="GO" id="GO:0019281">
    <property type="term" value="P:L-methionine biosynthetic process from homoserine via O-succinyl-L-homoserine and cystathionine"/>
    <property type="evidence" value="ECO:0007669"/>
    <property type="project" value="InterPro"/>
</dbReference>
<dbReference type="CDD" id="cd03131">
    <property type="entry name" value="GATase1_HTS"/>
    <property type="match status" value="1"/>
</dbReference>
<dbReference type="FunFam" id="3.40.50.880:FF:000004">
    <property type="entry name" value="Homoserine O-succinyltransferase"/>
    <property type="match status" value="1"/>
</dbReference>
<dbReference type="Gene3D" id="3.40.50.880">
    <property type="match status" value="1"/>
</dbReference>
<dbReference type="HAMAP" id="MF_00295">
    <property type="entry name" value="MetA_acyltransf"/>
    <property type="match status" value="1"/>
</dbReference>
<dbReference type="InterPro" id="IPR029062">
    <property type="entry name" value="Class_I_gatase-like"/>
</dbReference>
<dbReference type="InterPro" id="IPR005697">
    <property type="entry name" value="HST_MetA"/>
</dbReference>
<dbReference type="InterPro" id="IPR033752">
    <property type="entry name" value="MetA_family"/>
</dbReference>
<dbReference type="NCBIfam" id="TIGR01001">
    <property type="entry name" value="metA"/>
    <property type="match status" value="1"/>
</dbReference>
<dbReference type="PANTHER" id="PTHR20919">
    <property type="entry name" value="HOMOSERINE O-SUCCINYLTRANSFERASE"/>
    <property type="match status" value="1"/>
</dbReference>
<dbReference type="PANTHER" id="PTHR20919:SF0">
    <property type="entry name" value="HOMOSERINE O-SUCCINYLTRANSFERASE"/>
    <property type="match status" value="1"/>
</dbReference>
<dbReference type="Pfam" id="PF04204">
    <property type="entry name" value="HTS"/>
    <property type="match status" value="1"/>
</dbReference>
<dbReference type="PIRSF" id="PIRSF000450">
    <property type="entry name" value="H_ser_succinyltr"/>
    <property type="match status" value="1"/>
</dbReference>
<dbReference type="SUPFAM" id="SSF52317">
    <property type="entry name" value="Class I glutamine amidotransferase-like"/>
    <property type="match status" value="1"/>
</dbReference>
<evidence type="ECO:0000255" key="1">
    <source>
        <dbReference type="HAMAP-Rule" id="MF_00295"/>
    </source>
</evidence>